<keyword id="KW-0028">Amino-acid biosynthesis</keyword>
<keyword id="KW-0055">Arginine biosynthesis</keyword>
<keyword id="KW-0963">Cytoplasm</keyword>
<keyword id="KW-0521">NADP</keyword>
<keyword id="KW-0560">Oxidoreductase</keyword>
<keyword id="KW-1185">Reference proteome</keyword>
<gene>
    <name evidence="1" type="primary">argC</name>
    <name type="ordered locus">YPO3927</name>
    <name type="ordered locus">y0310</name>
    <name type="ordered locus">YP_3123</name>
</gene>
<sequence length="334" mass="35870">MLNTLIVGASGYAGAELTAYLNRHPHMNITGLAVSAQSADAGKLLSDLHPQLKGILDLPLQPLVDVAQAAKGIDVVFLATAHEVSHDLAPQFLAAGCVVFDLSGAFRVRDAAFYSQYYGFEHQHPDWLDKAVYGLAEWQSEDIKQAQLIAVPGCYPTASQLALKPLVDGQLLNDAQWPVINAVSGVSGAGRKASMGNSFCEVSLQPYGLFTHRHQPEIVTHLGTPVIFTPHLGNFARGILATITCRLKAGVTAQNIADAYHHAYQNKPLVRLYQQGVPALKAVVGLPFCDIGFSVQGEHLIIVATEDNLLKGAAAQAVQCMNIRFGFPETQSLL</sequence>
<protein>
    <recommendedName>
        <fullName evidence="1">N-acetyl-gamma-glutamyl-phosphate reductase</fullName>
        <shortName evidence="1">AGPR</shortName>
        <ecNumber evidence="1">1.2.1.38</ecNumber>
    </recommendedName>
    <alternativeName>
        <fullName evidence="1">N-acetyl-glutamate semialdehyde dehydrogenase</fullName>
        <shortName evidence="1">NAGSA dehydrogenase</shortName>
    </alternativeName>
</protein>
<dbReference type="EC" id="1.2.1.38" evidence="1"/>
<dbReference type="EMBL" id="AL590842">
    <property type="protein sequence ID" value="CAL22510.1"/>
    <property type="molecule type" value="Genomic_DNA"/>
</dbReference>
<dbReference type="EMBL" id="AE009952">
    <property type="protein sequence ID" value="AAM83901.1"/>
    <property type="molecule type" value="Genomic_DNA"/>
</dbReference>
<dbReference type="EMBL" id="AE017042">
    <property type="protein sequence ID" value="AAS63293.1"/>
    <property type="molecule type" value="Genomic_DNA"/>
</dbReference>
<dbReference type="PIR" id="AC0478">
    <property type="entry name" value="AC0478"/>
</dbReference>
<dbReference type="RefSeq" id="WP_002209489.1">
    <property type="nucleotide sequence ID" value="NZ_WUCM01000072.1"/>
</dbReference>
<dbReference type="RefSeq" id="YP_002348800.1">
    <property type="nucleotide sequence ID" value="NC_003143.1"/>
</dbReference>
<dbReference type="SMR" id="Q8ZA86"/>
<dbReference type="STRING" id="214092.YPO3927"/>
<dbReference type="PaxDb" id="214092-YPO3927"/>
<dbReference type="DNASU" id="1145257"/>
<dbReference type="EnsemblBacteria" id="AAS63293">
    <property type="protein sequence ID" value="AAS63293"/>
    <property type="gene ID" value="YP_3123"/>
</dbReference>
<dbReference type="GeneID" id="57974775"/>
<dbReference type="KEGG" id="ype:YPO3927"/>
<dbReference type="KEGG" id="ypk:y0310"/>
<dbReference type="KEGG" id="ypm:YP_3123"/>
<dbReference type="PATRIC" id="fig|214092.21.peg.4455"/>
<dbReference type="eggNOG" id="COG0002">
    <property type="taxonomic scope" value="Bacteria"/>
</dbReference>
<dbReference type="HOGENOM" id="CLU_006384_0_1_6"/>
<dbReference type="OMA" id="PHLTPMI"/>
<dbReference type="OrthoDB" id="9801289at2"/>
<dbReference type="UniPathway" id="UPA00068">
    <property type="reaction ID" value="UER00108"/>
</dbReference>
<dbReference type="Proteomes" id="UP000000815">
    <property type="component" value="Chromosome"/>
</dbReference>
<dbReference type="Proteomes" id="UP000001019">
    <property type="component" value="Chromosome"/>
</dbReference>
<dbReference type="Proteomes" id="UP000002490">
    <property type="component" value="Chromosome"/>
</dbReference>
<dbReference type="GO" id="GO:0005737">
    <property type="term" value="C:cytoplasm"/>
    <property type="evidence" value="ECO:0007669"/>
    <property type="project" value="UniProtKB-SubCell"/>
</dbReference>
<dbReference type="GO" id="GO:0003942">
    <property type="term" value="F:N-acetyl-gamma-glutamyl-phosphate reductase activity"/>
    <property type="evidence" value="ECO:0007669"/>
    <property type="project" value="UniProtKB-UniRule"/>
</dbReference>
<dbReference type="GO" id="GO:0051287">
    <property type="term" value="F:NAD binding"/>
    <property type="evidence" value="ECO:0007669"/>
    <property type="project" value="InterPro"/>
</dbReference>
<dbReference type="GO" id="GO:0070401">
    <property type="term" value="F:NADP+ binding"/>
    <property type="evidence" value="ECO:0007669"/>
    <property type="project" value="InterPro"/>
</dbReference>
<dbReference type="GO" id="GO:0006526">
    <property type="term" value="P:L-arginine biosynthetic process"/>
    <property type="evidence" value="ECO:0007669"/>
    <property type="project" value="UniProtKB-UniRule"/>
</dbReference>
<dbReference type="CDD" id="cd23934">
    <property type="entry name" value="AGPR_1_C"/>
    <property type="match status" value="1"/>
</dbReference>
<dbReference type="CDD" id="cd17895">
    <property type="entry name" value="AGPR_1_N"/>
    <property type="match status" value="1"/>
</dbReference>
<dbReference type="FunFam" id="3.30.360.10:FF:000014">
    <property type="entry name" value="N-acetyl-gamma-glutamyl-phosphate reductase"/>
    <property type="match status" value="1"/>
</dbReference>
<dbReference type="FunFam" id="3.40.50.720:FF:000117">
    <property type="entry name" value="N-acetyl-gamma-glutamyl-phosphate reductase"/>
    <property type="match status" value="1"/>
</dbReference>
<dbReference type="Gene3D" id="3.30.360.10">
    <property type="entry name" value="Dihydrodipicolinate Reductase, domain 2"/>
    <property type="match status" value="1"/>
</dbReference>
<dbReference type="Gene3D" id="3.40.50.720">
    <property type="entry name" value="NAD(P)-binding Rossmann-like Domain"/>
    <property type="match status" value="1"/>
</dbReference>
<dbReference type="HAMAP" id="MF_00150">
    <property type="entry name" value="ArgC_type1"/>
    <property type="match status" value="1"/>
</dbReference>
<dbReference type="InterPro" id="IPR023013">
    <property type="entry name" value="AGPR_AS"/>
</dbReference>
<dbReference type="InterPro" id="IPR000706">
    <property type="entry name" value="AGPR_type-1"/>
</dbReference>
<dbReference type="InterPro" id="IPR036291">
    <property type="entry name" value="NAD(P)-bd_dom_sf"/>
</dbReference>
<dbReference type="InterPro" id="IPR050085">
    <property type="entry name" value="NAGSA_dehydrogenase"/>
</dbReference>
<dbReference type="InterPro" id="IPR000534">
    <property type="entry name" value="Semialdehyde_DH_NAD-bd"/>
</dbReference>
<dbReference type="NCBIfam" id="TIGR01850">
    <property type="entry name" value="argC"/>
    <property type="match status" value="1"/>
</dbReference>
<dbReference type="PANTHER" id="PTHR32338:SF10">
    <property type="entry name" value="N-ACETYL-GAMMA-GLUTAMYL-PHOSPHATE REDUCTASE, CHLOROPLASTIC-RELATED"/>
    <property type="match status" value="1"/>
</dbReference>
<dbReference type="PANTHER" id="PTHR32338">
    <property type="entry name" value="N-ACETYL-GAMMA-GLUTAMYL-PHOSPHATE REDUCTASE, CHLOROPLASTIC-RELATED-RELATED"/>
    <property type="match status" value="1"/>
</dbReference>
<dbReference type="Pfam" id="PF01118">
    <property type="entry name" value="Semialdhyde_dh"/>
    <property type="match status" value="1"/>
</dbReference>
<dbReference type="Pfam" id="PF22698">
    <property type="entry name" value="Semialdhyde_dhC_1"/>
    <property type="match status" value="1"/>
</dbReference>
<dbReference type="SMART" id="SM00859">
    <property type="entry name" value="Semialdhyde_dh"/>
    <property type="match status" value="1"/>
</dbReference>
<dbReference type="SUPFAM" id="SSF55347">
    <property type="entry name" value="Glyceraldehyde-3-phosphate dehydrogenase-like, C-terminal domain"/>
    <property type="match status" value="1"/>
</dbReference>
<dbReference type="SUPFAM" id="SSF51735">
    <property type="entry name" value="NAD(P)-binding Rossmann-fold domains"/>
    <property type="match status" value="1"/>
</dbReference>
<dbReference type="PROSITE" id="PS01224">
    <property type="entry name" value="ARGC"/>
    <property type="match status" value="1"/>
</dbReference>
<comment type="function">
    <text evidence="1">Catalyzes the NADPH-dependent reduction of N-acetyl-5-glutamyl phosphate to yield N-acetyl-L-glutamate 5-semialdehyde.</text>
</comment>
<comment type="catalytic activity">
    <reaction evidence="1">
        <text>N-acetyl-L-glutamate 5-semialdehyde + phosphate + NADP(+) = N-acetyl-L-glutamyl 5-phosphate + NADPH + H(+)</text>
        <dbReference type="Rhea" id="RHEA:21588"/>
        <dbReference type="ChEBI" id="CHEBI:15378"/>
        <dbReference type="ChEBI" id="CHEBI:29123"/>
        <dbReference type="ChEBI" id="CHEBI:43474"/>
        <dbReference type="ChEBI" id="CHEBI:57783"/>
        <dbReference type="ChEBI" id="CHEBI:57936"/>
        <dbReference type="ChEBI" id="CHEBI:58349"/>
        <dbReference type="EC" id="1.2.1.38"/>
    </reaction>
</comment>
<comment type="pathway">
    <text evidence="1">Amino-acid biosynthesis; L-arginine biosynthesis; N(2)-acetyl-L-ornithine from L-glutamate: step 3/4.</text>
</comment>
<comment type="subcellular location">
    <subcellularLocation>
        <location evidence="1">Cytoplasm</location>
    </subcellularLocation>
</comment>
<comment type="similarity">
    <text evidence="1">Belongs to the NAGSA dehydrogenase family. Type 1 subfamily.</text>
</comment>
<accession>Q8ZA86</accession>
<accession>Q0WA88</accession>
<organism>
    <name type="scientific">Yersinia pestis</name>
    <dbReference type="NCBI Taxonomy" id="632"/>
    <lineage>
        <taxon>Bacteria</taxon>
        <taxon>Pseudomonadati</taxon>
        <taxon>Pseudomonadota</taxon>
        <taxon>Gammaproteobacteria</taxon>
        <taxon>Enterobacterales</taxon>
        <taxon>Yersiniaceae</taxon>
        <taxon>Yersinia</taxon>
    </lineage>
</organism>
<reference key="1">
    <citation type="journal article" date="2001" name="Nature">
        <title>Genome sequence of Yersinia pestis, the causative agent of plague.</title>
        <authorList>
            <person name="Parkhill J."/>
            <person name="Wren B.W."/>
            <person name="Thomson N.R."/>
            <person name="Titball R.W."/>
            <person name="Holden M.T.G."/>
            <person name="Prentice M.B."/>
            <person name="Sebaihia M."/>
            <person name="James K.D."/>
            <person name="Churcher C.M."/>
            <person name="Mungall K.L."/>
            <person name="Baker S."/>
            <person name="Basham D."/>
            <person name="Bentley S.D."/>
            <person name="Brooks K."/>
            <person name="Cerdeno-Tarraga A.-M."/>
            <person name="Chillingworth T."/>
            <person name="Cronin A."/>
            <person name="Davies R.M."/>
            <person name="Davis P."/>
            <person name="Dougan G."/>
            <person name="Feltwell T."/>
            <person name="Hamlin N."/>
            <person name="Holroyd S."/>
            <person name="Jagels K."/>
            <person name="Karlyshev A.V."/>
            <person name="Leather S."/>
            <person name="Moule S."/>
            <person name="Oyston P.C.F."/>
            <person name="Quail M.A."/>
            <person name="Rutherford K.M."/>
            <person name="Simmonds M."/>
            <person name="Skelton J."/>
            <person name="Stevens K."/>
            <person name="Whitehead S."/>
            <person name="Barrell B.G."/>
        </authorList>
    </citation>
    <scope>NUCLEOTIDE SEQUENCE [LARGE SCALE GENOMIC DNA]</scope>
    <source>
        <strain>CO-92 / Biovar Orientalis</strain>
    </source>
</reference>
<reference key="2">
    <citation type="journal article" date="2002" name="J. Bacteriol.">
        <title>Genome sequence of Yersinia pestis KIM.</title>
        <authorList>
            <person name="Deng W."/>
            <person name="Burland V."/>
            <person name="Plunkett G. III"/>
            <person name="Boutin A."/>
            <person name="Mayhew G.F."/>
            <person name="Liss P."/>
            <person name="Perna N.T."/>
            <person name="Rose D.J."/>
            <person name="Mau B."/>
            <person name="Zhou S."/>
            <person name="Schwartz D.C."/>
            <person name="Fetherston J.D."/>
            <person name="Lindler L.E."/>
            <person name="Brubaker R.R."/>
            <person name="Plano G.V."/>
            <person name="Straley S.C."/>
            <person name="McDonough K.A."/>
            <person name="Nilles M.L."/>
            <person name="Matson J.S."/>
            <person name="Blattner F.R."/>
            <person name="Perry R.D."/>
        </authorList>
    </citation>
    <scope>NUCLEOTIDE SEQUENCE [LARGE SCALE GENOMIC DNA]</scope>
    <source>
        <strain>KIM10+ / Biovar Mediaevalis</strain>
    </source>
</reference>
<reference key="3">
    <citation type="journal article" date="2004" name="DNA Res.">
        <title>Complete genome sequence of Yersinia pestis strain 91001, an isolate avirulent to humans.</title>
        <authorList>
            <person name="Song Y."/>
            <person name="Tong Z."/>
            <person name="Wang J."/>
            <person name="Wang L."/>
            <person name="Guo Z."/>
            <person name="Han Y."/>
            <person name="Zhang J."/>
            <person name="Pei D."/>
            <person name="Zhou D."/>
            <person name="Qin H."/>
            <person name="Pang X."/>
            <person name="Han Y."/>
            <person name="Zhai J."/>
            <person name="Li M."/>
            <person name="Cui B."/>
            <person name="Qi Z."/>
            <person name="Jin L."/>
            <person name="Dai R."/>
            <person name="Chen F."/>
            <person name="Li S."/>
            <person name="Ye C."/>
            <person name="Du Z."/>
            <person name="Lin W."/>
            <person name="Wang J."/>
            <person name="Yu J."/>
            <person name="Yang H."/>
            <person name="Wang J."/>
            <person name="Huang P."/>
            <person name="Yang R."/>
        </authorList>
    </citation>
    <scope>NUCLEOTIDE SEQUENCE [LARGE SCALE GENOMIC DNA]</scope>
    <source>
        <strain>91001 / Biovar Mediaevalis</strain>
    </source>
</reference>
<feature type="chain" id="PRO_0000112480" description="N-acetyl-gamma-glutamyl-phosphate reductase">
    <location>
        <begin position="1"/>
        <end position="334"/>
    </location>
</feature>
<feature type="active site" evidence="1">
    <location>
        <position position="154"/>
    </location>
</feature>
<proteinExistence type="inferred from homology"/>
<evidence type="ECO:0000255" key="1">
    <source>
        <dbReference type="HAMAP-Rule" id="MF_00150"/>
    </source>
</evidence>
<name>ARGC_YERPE</name>